<dbReference type="EMBL" id="DS027056">
    <property type="protein sequence ID" value="EAW09134.1"/>
    <property type="molecule type" value="Genomic_DNA"/>
</dbReference>
<dbReference type="RefSeq" id="XP_001270560.1">
    <property type="nucleotide sequence ID" value="XM_001270559.1"/>
</dbReference>
<dbReference type="SMR" id="A1CJ10"/>
<dbReference type="STRING" id="344612.A1CJ10"/>
<dbReference type="EnsemblFungi" id="EAW09134">
    <property type="protein sequence ID" value="EAW09134"/>
    <property type="gene ID" value="ACLA_033370"/>
</dbReference>
<dbReference type="GeneID" id="4703215"/>
<dbReference type="KEGG" id="act:ACLA_033370"/>
<dbReference type="VEuPathDB" id="FungiDB:ACLA_033370"/>
<dbReference type="eggNOG" id="KOG1756">
    <property type="taxonomic scope" value="Eukaryota"/>
</dbReference>
<dbReference type="HOGENOM" id="CLU_062828_3_0_1"/>
<dbReference type="OMA" id="CALESQH"/>
<dbReference type="OrthoDB" id="9421954at2759"/>
<dbReference type="Proteomes" id="UP000006701">
    <property type="component" value="Unassembled WGS sequence"/>
</dbReference>
<dbReference type="GO" id="GO:0000786">
    <property type="term" value="C:nucleosome"/>
    <property type="evidence" value="ECO:0007669"/>
    <property type="project" value="UniProtKB-KW"/>
</dbReference>
<dbReference type="GO" id="GO:0005634">
    <property type="term" value="C:nucleus"/>
    <property type="evidence" value="ECO:0007669"/>
    <property type="project" value="UniProtKB-SubCell"/>
</dbReference>
<dbReference type="GO" id="GO:0003677">
    <property type="term" value="F:DNA binding"/>
    <property type="evidence" value="ECO:0007669"/>
    <property type="project" value="UniProtKB-KW"/>
</dbReference>
<dbReference type="GO" id="GO:0046982">
    <property type="term" value="F:protein heterodimerization activity"/>
    <property type="evidence" value="ECO:0007669"/>
    <property type="project" value="InterPro"/>
</dbReference>
<dbReference type="GO" id="GO:0030527">
    <property type="term" value="F:structural constituent of chromatin"/>
    <property type="evidence" value="ECO:0007669"/>
    <property type="project" value="InterPro"/>
</dbReference>
<dbReference type="GO" id="GO:0006281">
    <property type="term" value="P:DNA repair"/>
    <property type="evidence" value="ECO:0007669"/>
    <property type="project" value="UniProtKB-KW"/>
</dbReference>
<dbReference type="CDD" id="cd00074">
    <property type="entry name" value="HFD_H2A"/>
    <property type="match status" value="1"/>
</dbReference>
<dbReference type="FunFam" id="1.10.20.10:FF:000008">
    <property type="entry name" value="Histone H2A"/>
    <property type="match status" value="1"/>
</dbReference>
<dbReference type="Gene3D" id="1.10.20.10">
    <property type="entry name" value="Histone, subunit A"/>
    <property type="match status" value="1"/>
</dbReference>
<dbReference type="InterPro" id="IPR009072">
    <property type="entry name" value="Histone-fold"/>
</dbReference>
<dbReference type="InterPro" id="IPR002119">
    <property type="entry name" value="Histone_H2A"/>
</dbReference>
<dbReference type="InterPro" id="IPR007125">
    <property type="entry name" value="Histone_H2A/H2B/H3"/>
</dbReference>
<dbReference type="InterPro" id="IPR032454">
    <property type="entry name" value="Histone_H2A_C"/>
</dbReference>
<dbReference type="InterPro" id="IPR032458">
    <property type="entry name" value="Histone_H2A_CS"/>
</dbReference>
<dbReference type="PANTHER" id="PTHR23430">
    <property type="entry name" value="HISTONE H2A"/>
    <property type="match status" value="1"/>
</dbReference>
<dbReference type="Pfam" id="PF00125">
    <property type="entry name" value="Histone"/>
    <property type="match status" value="1"/>
</dbReference>
<dbReference type="Pfam" id="PF16211">
    <property type="entry name" value="Histone_H2A_C"/>
    <property type="match status" value="1"/>
</dbReference>
<dbReference type="PRINTS" id="PR00620">
    <property type="entry name" value="HISTONEH2A"/>
</dbReference>
<dbReference type="SMART" id="SM00414">
    <property type="entry name" value="H2A"/>
    <property type="match status" value="1"/>
</dbReference>
<dbReference type="SUPFAM" id="SSF47113">
    <property type="entry name" value="Histone-fold"/>
    <property type="match status" value="1"/>
</dbReference>
<dbReference type="PROSITE" id="PS00046">
    <property type="entry name" value="HISTONE_H2A"/>
    <property type="match status" value="1"/>
</dbReference>
<protein>
    <recommendedName>
        <fullName>Histone H2A</fullName>
    </recommendedName>
</protein>
<gene>
    <name type="primary">hta1</name>
    <name type="ORF">ACLA_033370</name>
</gene>
<accession>A1CJ10</accession>
<keyword id="KW-0007">Acetylation</keyword>
<keyword id="KW-0158">Chromosome</keyword>
<keyword id="KW-0227">DNA damage</keyword>
<keyword id="KW-0234">DNA repair</keyword>
<keyword id="KW-0238">DNA-binding</keyword>
<keyword id="KW-0488">Methylation</keyword>
<keyword id="KW-0544">Nucleosome core</keyword>
<keyword id="KW-0539">Nucleus</keyword>
<keyword id="KW-0597">Phosphoprotein</keyword>
<keyword id="KW-1185">Reference proteome</keyword>
<proteinExistence type="inferred from homology"/>
<evidence type="ECO:0000250" key="1"/>
<evidence type="ECO:0000256" key="2">
    <source>
        <dbReference type="SAM" id="MobiDB-lite"/>
    </source>
</evidence>
<evidence type="ECO:0000305" key="3"/>
<name>H2A_ASPCL</name>
<comment type="function">
    <text>Core component of nucleosome which plays a central role in DNA double strand break (DSB) repair. Nucleosomes wrap and compact DNA into chromatin, limiting DNA accessibility to the cellular machineries which require DNA as a template. Histones thereby play a central role in transcription regulation, DNA repair, DNA replication and chromosomal stability. DNA accessibility is regulated via a complex set of post-translational modifications of histones, also called histone code, and nucleosome remodeling.</text>
</comment>
<comment type="subunit">
    <text>The nucleosome is a histone octamer containing two molecules each of H2A, H2B, H3 and H4 assembled in one H3-H4 heterotetramer and two H2A-H2B heterodimers. The octamer wraps approximately 147 bp of DNA.</text>
</comment>
<comment type="subcellular location">
    <subcellularLocation>
        <location>Nucleus</location>
    </subcellularLocation>
    <subcellularLocation>
        <location>Chromosome</location>
    </subcellularLocation>
</comment>
<comment type="domain">
    <text>The [ST]-Q motif constitutes a recognition sequence for kinases from the PI3/PI4-kinase family.</text>
</comment>
<comment type="PTM">
    <text evidence="1">Phosphorylated to form H2AS128ph (gamma-H2A) in response to DNA double-strand breaks (DSBs) generated by exogenous genotoxic agents and by stalled replication forks. Phosphorylation is dependent on the DNA damage checkpoint kinases mec1/ATR and tel1/ATM, spreads on either side of a detected DSB site and may mark the surrounding chromatin for recruitment of proteins required for DNA damage signaling and repair. Gamma-H2A is removed from the DNA prior to the strand invasion-primer extension step of the repair process and subsequently dephosphorylated. Dephosphorylation is necessary for efficient recovery from the DNA damage checkpoint (By similarity).</text>
</comment>
<comment type="PTM">
    <text evidence="1">Acetylated by esa1 to form H2AK4ac and H2AK7ac.</text>
</comment>
<comment type="miscellaneous">
    <text evidence="3">In contrast to vertebrates and insects, its C-terminus is not monoubiquitinated.</text>
</comment>
<comment type="similarity">
    <text evidence="3">Belongs to the histone H2A family.</text>
</comment>
<comment type="caution">
    <text evidence="3">To ensure consistency between histone entries, we follow the 'Brno' nomenclature for histone modifications, with positions referring to those used in the literature for the 'closest' model organism. Due to slight variations in histone sequences between organisms and to the presence of initiator methionine in UniProtKB/Swiss-Prot sequences, the actual positions of modified amino acids in the sequence generally differ. In this entry the following conventions are used: H2AK4ac = acetylated Lys-5; H2AK7ac = acetylated Lys-9; H2AS128ph = phosphorylated Ser-130.</text>
</comment>
<sequence length="133" mass="14092">MTGGKSGGKASGSKNAQSRSSKAGLAFPVGRVHRLLRKGNYAQRVGAGAPVYLAAVLEYLAAEILELAGNAARDNKKTRIIPRHLQLAIRNDEELNKLLGHVTIAQGGVLPNIHQNLLPKKTPKSGKGPSQEL</sequence>
<feature type="initiator methionine" description="Removed" evidence="1">
    <location>
        <position position="1"/>
    </location>
</feature>
<feature type="chain" id="PRO_0000297730" description="Histone H2A">
    <location>
        <begin position="2"/>
        <end position="133"/>
    </location>
</feature>
<feature type="region of interest" description="Disordered" evidence="2">
    <location>
        <begin position="1"/>
        <end position="24"/>
    </location>
</feature>
<feature type="short sequence motif" description="[ST]-Q motif">
    <location>
        <begin position="130"/>
        <end position="131"/>
    </location>
</feature>
<feature type="compositionally biased region" description="Gly residues" evidence="2">
    <location>
        <begin position="1"/>
        <end position="10"/>
    </location>
</feature>
<feature type="site" description="Not ubiquitinated" evidence="3">
    <location>
        <position position="120"/>
    </location>
</feature>
<feature type="modified residue" description="N6-acetyllysine" evidence="1">
    <location>
        <position position="5"/>
    </location>
</feature>
<feature type="modified residue" description="N6-acetyllysine" evidence="1">
    <location>
        <position position="9"/>
    </location>
</feature>
<feature type="modified residue" description="N5-methylglutamine" evidence="1">
    <location>
        <position position="106"/>
    </location>
</feature>
<feature type="modified residue" description="Phosphoserine" evidence="1">
    <location>
        <position position="130"/>
    </location>
</feature>
<organism>
    <name type="scientific">Aspergillus clavatus (strain ATCC 1007 / CBS 513.65 / DSM 816 / NCTC 3887 / NRRL 1 / QM 1276 / 107)</name>
    <dbReference type="NCBI Taxonomy" id="344612"/>
    <lineage>
        <taxon>Eukaryota</taxon>
        <taxon>Fungi</taxon>
        <taxon>Dikarya</taxon>
        <taxon>Ascomycota</taxon>
        <taxon>Pezizomycotina</taxon>
        <taxon>Eurotiomycetes</taxon>
        <taxon>Eurotiomycetidae</taxon>
        <taxon>Eurotiales</taxon>
        <taxon>Aspergillaceae</taxon>
        <taxon>Aspergillus</taxon>
        <taxon>Aspergillus subgen. Fumigati</taxon>
    </lineage>
</organism>
<reference key="1">
    <citation type="journal article" date="2008" name="PLoS Genet.">
        <title>Genomic islands in the pathogenic filamentous fungus Aspergillus fumigatus.</title>
        <authorList>
            <person name="Fedorova N.D."/>
            <person name="Khaldi N."/>
            <person name="Joardar V.S."/>
            <person name="Maiti R."/>
            <person name="Amedeo P."/>
            <person name="Anderson M.J."/>
            <person name="Crabtree J."/>
            <person name="Silva J.C."/>
            <person name="Badger J.H."/>
            <person name="Albarraq A."/>
            <person name="Angiuoli S."/>
            <person name="Bussey H."/>
            <person name="Bowyer P."/>
            <person name="Cotty P.J."/>
            <person name="Dyer P.S."/>
            <person name="Egan A."/>
            <person name="Galens K."/>
            <person name="Fraser-Liggett C.M."/>
            <person name="Haas B.J."/>
            <person name="Inman J.M."/>
            <person name="Kent R."/>
            <person name="Lemieux S."/>
            <person name="Malavazi I."/>
            <person name="Orvis J."/>
            <person name="Roemer T."/>
            <person name="Ronning C.M."/>
            <person name="Sundaram J.P."/>
            <person name="Sutton G."/>
            <person name="Turner G."/>
            <person name="Venter J.C."/>
            <person name="White O.R."/>
            <person name="Whitty B.R."/>
            <person name="Youngman P."/>
            <person name="Wolfe K.H."/>
            <person name="Goldman G.H."/>
            <person name="Wortman J.R."/>
            <person name="Jiang B."/>
            <person name="Denning D.W."/>
            <person name="Nierman W.C."/>
        </authorList>
    </citation>
    <scope>NUCLEOTIDE SEQUENCE [LARGE SCALE GENOMIC DNA]</scope>
    <source>
        <strain>ATCC 1007 / CBS 513.65 / DSM 816 / NCTC 3887 / NRRL 1 / QM 1276 / 107</strain>
    </source>
</reference>